<dbReference type="EC" id="2.1.2.9" evidence="1"/>
<dbReference type="EMBL" id="CP000381">
    <property type="protein sequence ID" value="ABX74157.1"/>
    <property type="molecule type" value="Genomic_DNA"/>
</dbReference>
<dbReference type="RefSeq" id="WP_012222146.1">
    <property type="nucleotide sequence ID" value="NC_010120.1"/>
</dbReference>
<dbReference type="SMR" id="A9M463"/>
<dbReference type="KEGG" id="nmn:NMCC_2038"/>
<dbReference type="HOGENOM" id="CLU_033347_1_2_4"/>
<dbReference type="Proteomes" id="UP000001177">
    <property type="component" value="Chromosome"/>
</dbReference>
<dbReference type="GO" id="GO:0005829">
    <property type="term" value="C:cytosol"/>
    <property type="evidence" value="ECO:0007669"/>
    <property type="project" value="TreeGrafter"/>
</dbReference>
<dbReference type="GO" id="GO:0004479">
    <property type="term" value="F:methionyl-tRNA formyltransferase activity"/>
    <property type="evidence" value="ECO:0007669"/>
    <property type="project" value="UniProtKB-UniRule"/>
</dbReference>
<dbReference type="CDD" id="cd08646">
    <property type="entry name" value="FMT_core_Met-tRNA-FMT_N"/>
    <property type="match status" value="1"/>
</dbReference>
<dbReference type="CDD" id="cd08704">
    <property type="entry name" value="Met_tRNA_FMT_C"/>
    <property type="match status" value="1"/>
</dbReference>
<dbReference type="FunFam" id="3.40.50.12230:FF:000001">
    <property type="entry name" value="Methionyl-tRNA formyltransferase"/>
    <property type="match status" value="1"/>
</dbReference>
<dbReference type="Gene3D" id="3.40.50.12230">
    <property type="match status" value="1"/>
</dbReference>
<dbReference type="HAMAP" id="MF_00182">
    <property type="entry name" value="Formyl_trans"/>
    <property type="match status" value="1"/>
</dbReference>
<dbReference type="InterPro" id="IPR005794">
    <property type="entry name" value="Fmt"/>
</dbReference>
<dbReference type="InterPro" id="IPR005793">
    <property type="entry name" value="Formyl_trans_C"/>
</dbReference>
<dbReference type="InterPro" id="IPR002376">
    <property type="entry name" value="Formyl_transf_N"/>
</dbReference>
<dbReference type="InterPro" id="IPR036477">
    <property type="entry name" value="Formyl_transf_N_sf"/>
</dbReference>
<dbReference type="InterPro" id="IPR011034">
    <property type="entry name" value="Formyl_transferase-like_C_sf"/>
</dbReference>
<dbReference type="InterPro" id="IPR001555">
    <property type="entry name" value="GART_AS"/>
</dbReference>
<dbReference type="InterPro" id="IPR044135">
    <property type="entry name" value="Met-tRNA-FMT_C"/>
</dbReference>
<dbReference type="InterPro" id="IPR041711">
    <property type="entry name" value="Met-tRNA-FMT_N"/>
</dbReference>
<dbReference type="NCBIfam" id="TIGR00460">
    <property type="entry name" value="fmt"/>
    <property type="match status" value="1"/>
</dbReference>
<dbReference type="PANTHER" id="PTHR11138">
    <property type="entry name" value="METHIONYL-TRNA FORMYLTRANSFERASE"/>
    <property type="match status" value="1"/>
</dbReference>
<dbReference type="PANTHER" id="PTHR11138:SF5">
    <property type="entry name" value="METHIONYL-TRNA FORMYLTRANSFERASE, MITOCHONDRIAL"/>
    <property type="match status" value="1"/>
</dbReference>
<dbReference type="Pfam" id="PF02911">
    <property type="entry name" value="Formyl_trans_C"/>
    <property type="match status" value="1"/>
</dbReference>
<dbReference type="Pfam" id="PF00551">
    <property type="entry name" value="Formyl_trans_N"/>
    <property type="match status" value="1"/>
</dbReference>
<dbReference type="SUPFAM" id="SSF50486">
    <property type="entry name" value="FMT C-terminal domain-like"/>
    <property type="match status" value="1"/>
</dbReference>
<dbReference type="SUPFAM" id="SSF53328">
    <property type="entry name" value="Formyltransferase"/>
    <property type="match status" value="1"/>
</dbReference>
<dbReference type="PROSITE" id="PS00373">
    <property type="entry name" value="GART"/>
    <property type="match status" value="1"/>
</dbReference>
<sequence length="308" mass="32866">MKVIFAGTPDFAAAALRAVAAAGFEIPLVLTQPDRPKGRGMQLTAPPVKQAALELGLRVEQPEKLRNNAEALQMLKEVEADVMVVAAYGLILPQDVLDVPKHGCLNIHASLLPRWRGAAPIQRAIEAGDAETGVCIMQMDAGLDTGDVVSEHRYAIRPTDTANEVHDALMEIGAAAVVADLQQLQSKGRLNAVKQPKEGVTYAQKLSKEEARIDWSESAAVIERKIRAFNPVPAAWVEYQGKPMKIRRAEVVAQQGAAGEVLSCSADGLVVACGENALKITELQPAGGKRMSIQAFAAGRTIEVGTVL</sequence>
<protein>
    <recommendedName>
        <fullName evidence="1">Methionyl-tRNA formyltransferase</fullName>
        <ecNumber evidence="1">2.1.2.9</ecNumber>
    </recommendedName>
</protein>
<proteinExistence type="inferred from homology"/>
<comment type="function">
    <text evidence="1">Attaches a formyl group to the free amino group of methionyl-tRNA(fMet). The formyl group appears to play a dual role in the initiator identity of N-formylmethionyl-tRNA by promoting its recognition by IF2 and preventing the misappropriation of this tRNA by the elongation apparatus.</text>
</comment>
<comment type="catalytic activity">
    <reaction evidence="1">
        <text>L-methionyl-tRNA(fMet) + (6R)-10-formyltetrahydrofolate = N-formyl-L-methionyl-tRNA(fMet) + (6S)-5,6,7,8-tetrahydrofolate + H(+)</text>
        <dbReference type="Rhea" id="RHEA:24380"/>
        <dbReference type="Rhea" id="RHEA-COMP:9952"/>
        <dbReference type="Rhea" id="RHEA-COMP:9953"/>
        <dbReference type="ChEBI" id="CHEBI:15378"/>
        <dbReference type="ChEBI" id="CHEBI:57453"/>
        <dbReference type="ChEBI" id="CHEBI:78530"/>
        <dbReference type="ChEBI" id="CHEBI:78844"/>
        <dbReference type="ChEBI" id="CHEBI:195366"/>
        <dbReference type="EC" id="2.1.2.9"/>
    </reaction>
</comment>
<comment type="similarity">
    <text evidence="1">Belongs to the Fmt family.</text>
</comment>
<accession>A9M463</accession>
<evidence type="ECO:0000255" key="1">
    <source>
        <dbReference type="HAMAP-Rule" id="MF_00182"/>
    </source>
</evidence>
<reference key="1">
    <citation type="journal article" date="2008" name="Genomics">
        <title>Characterization of ST-4821 complex, a unique Neisseria meningitidis clone.</title>
        <authorList>
            <person name="Peng J."/>
            <person name="Yang L."/>
            <person name="Yang F."/>
            <person name="Yang J."/>
            <person name="Yan Y."/>
            <person name="Nie H."/>
            <person name="Zhang X."/>
            <person name="Xiong Z."/>
            <person name="Jiang Y."/>
            <person name="Cheng F."/>
            <person name="Xu X."/>
            <person name="Chen S."/>
            <person name="Sun L."/>
            <person name="Li W."/>
            <person name="Shen Y."/>
            <person name="Shao Z."/>
            <person name="Liang X."/>
            <person name="Xu J."/>
            <person name="Jin Q."/>
        </authorList>
    </citation>
    <scope>NUCLEOTIDE SEQUENCE [LARGE SCALE GENOMIC DNA]</scope>
    <source>
        <strain>053442</strain>
    </source>
</reference>
<gene>
    <name evidence="1" type="primary">fmt</name>
    <name type="ordered locus">NMCC_2038</name>
</gene>
<keyword id="KW-0648">Protein biosynthesis</keyword>
<keyword id="KW-0808">Transferase</keyword>
<name>FMT_NEIM0</name>
<feature type="chain" id="PRO_1000077308" description="Methionyl-tRNA formyltransferase">
    <location>
        <begin position="1"/>
        <end position="308"/>
    </location>
</feature>
<feature type="binding site" evidence="1">
    <location>
        <begin position="110"/>
        <end position="113"/>
    </location>
    <ligand>
        <name>(6S)-5,6,7,8-tetrahydrofolate</name>
        <dbReference type="ChEBI" id="CHEBI:57453"/>
    </ligand>
</feature>
<organism>
    <name type="scientific">Neisseria meningitidis serogroup C (strain 053442)</name>
    <dbReference type="NCBI Taxonomy" id="374833"/>
    <lineage>
        <taxon>Bacteria</taxon>
        <taxon>Pseudomonadati</taxon>
        <taxon>Pseudomonadota</taxon>
        <taxon>Betaproteobacteria</taxon>
        <taxon>Neisseriales</taxon>
        <taxon>Neisseriaceae</taxon>
        <taxon>Neisseria</taxon>
    </lineage>
</organism>